<organism>
    <name type="scientific">Mus musculus</name>
    <name type="common">Mouse</name>
    <dbReference type="NCBI Taxonomy" id="10090"/>
    <lineage>
        <taxon>Eukaryota</taxon>
        <taxon>Metazoa</taxon>
        <taxon>Chordata</taxon>
        <taxon>Craniata</taxon>
        <taxon>Vertebrata</taxon>
        <taxon>Euteleostomi</taxon>
        <taxon>Mammalia</taxon>
        <taxon>Eutheria</taxon>
        <taxon>Euarchontoglires</taxon>
        <taxon>Glires</taxon>
        <taxon>Rodentia</taxon>
        <taxon>Myomorpha</taxon>
        <taxon>Muroidea</taxon>
        <taxon>Muridae</taxon>
        <taxon>Murinae</taxon>
        <taxon>Mus</taxon>
        <taxon>Mus</taxon>
    </lineage>
</organism>
<sequence length="567" mass="64801">MIDRQRMGLWALAILTLPMYLTVTEGSKSSWGLENEALIVRCPQRGRSTYPVEWYYSDTNESIPTQKRNRIFVSRDRLKFLPARVEDSGIYACVIRSPNLNKTGYLNVTIHKKPPSCNIPDYLMYSTVRGSDKNFKITCPTIDLYNWTAPVQWFKNCKALQEPRFRAHRSYLFIDNVTHDDEGDYTCQFTHAENGTNYIVTATRSFTVEEKGFSMFPVITNPPYNHTMEVEIGKPASIACSACFGKGSHFLADVLWQINKTVVGNFGEARIQEEEGRNESSSNDMDCLTSVLRITGVTEKDLSLEYDCLALNLHGMIRHTIRLRRKQPIDHRSIYYIVAGCSLLLMFINVLVIVLKVFWIEVALFWRDIVTPYKTRNDGKLYDAYIIYPRVFRGSAAGTHSVEYFVHHTLPDVLENKCGYKLCIYGRDLLPGQDAATVVESSIQNSRRQVFVLAPHMMHSKEFAYEQEIALHSALIQNNSKVILIEMEPLGEASRLQVGDLQDSLQHLVKIQGTIKWREDHVADKQSLSSKFWKHVRYQMPVPERASKTASVAAPLSGKACLDLKHF</sequence>
<evidence type="ECO:0000250" key="1"/>
<evidence type="ECO:0000250" key="2">
    <source>
        <dbReference type="UniProtKB" id="Q01638"/>
    </source>
</evidence>
<evidence type="ECO:0000255" key="3"/>
<evidence type="ECO:0000255" key="4">
    <source>
        <dbReference type="PROSITE-ProRule" id="PRU00114"/>
    </source>
</evidence>
<evidence type="ECO:0000255" key="5">
    <source>
        <dbReference type="PROSITE-ProRule" id="PRU00204"/>
    </source>
</evidence>
<evidence type="ECO:0000269" key="6">
    <source>
    </source>
</evidence>
<evidence type="ECO:0000269" key="7">
    <source>
    </source>
</evidence>
<evidence type="ECO:0000269" key="8">
    <source>
    </source>
</evidence>
<evidence type="ECO:0000269" key="9">
    <source>
    </source>
</evidence>
<evidence type="ECO:0000269" key="10">
    <source>
    </source>
</evidence>
<evidence type="ECO:0000269" key="11">
    <source>
    </source>
</evidence>
<evidence type="ECO:0000269" key="12">
    <source>
    </source>
</evidence>
<evidence type="ECO:0000269" key="13">
    <source>
    </source>
</evidence>
<evidence type="ECO:0000269" key="14">
    <source>
    </source>
</evidence>
<evidence type="ECO:0000269" key="15">
    <source>
    </source>
</evidence>
<evidence type="ECO:0000303" key="16">
    <source>
    </source>
</evidence>
<evidence type="ECO:0000303" key="17">
    <source>
    </source>
</evidence>
<evidence type="ECO:0000303" key="18">
    <source>
    </source>
</evidence>
<evidence type="ECO:0000305" key="19"/>
<evidence type="ECO:0007744" key="20">
    <source>
        <dbReference type="PDB" id="5VI4"/>
    </source>
</evidence>
<evidence type="ECO:0007829" key="21">
    <source>
        <dbReference type="PDB" id="5VI4"/>
    </source>
</evidence>
<feature type="signal peptide" evidence="3">
    <location>
        <begin position="1"/>
        <end position="26"/>
    </location>
</feature>
<feature type="chain" id="PRO_0000015443" description="Interleukin-1 receptor-like 1">
    <location>
        <begin position="27"/>
        <end position="567"/>
    </location>
</feature>
<feature type="topological domain" description="Extracellular" evidence="3">
    <location>
        <begin position="27"/>
        <end position="332"/>
    </location>
</feature>
<feature type="transmembrane region" description="Helical" evidence="3">
    <location>
        <begin position="333"/>
        <end position="355"/>
    </location>
</feature>
<feature type="topological domain" description="Cytoplasmic" evidence="3">
    <location>
        <begin position="356"/>
        <end position="567"/>
    </location>
</feature>
<feature type="domain" description="Ig-like C2-type 1">
    <location>
        <begin position="27"/>
        <end position="109"/>
    </location>
</feature>
<feature type="domain" description="Ig-like C2-type 2">
    <location>
        <begin position="120"/>
        <end position="203"/>
    </location>
</feature>
<feature type="domain" description="Ig-like C2-type 3">
    <location>
        <begin position="217"/>
        <end position="324"/>
    </location>
</feature>
<feature type="domain" description="TIR" evidence="5">
    <location>
        <begin position="380"/>
        <end position="540"/>
    </location>
</feature>
<feature type="region of interest" description="Flexible linker" evidence="1">
    <location>
        <begin position="204"/>
        <end position="216"/>
    </location>
</feature>
<feature type="active site" evidence="5">
    <location>
        <position position="466"/>
    </location>
</feature>
<feature type="modified residue" description="Phosphoserine; by GSK3-beta" evidence="11">
    <location>
        <position position="442"/>
    </location>
</feature>
<feature type="glycosylation site" description="N-linked (GlcNAc...) asparagine" evidence="3">
    <location>
        <position position="60"/>
    </location>
</feature>
<feature type="glycosylation site" description="N-linked (GlcNAc...) asparagine" evidence="3">
    <location>
        <position position="101"/>
    </location>
</feature>
<feature type="glycosylation site" description="N-linked (GlcNAc...) asparagine" evidence="3">
    <location>
        <position position="107"/>
    </location>
</feature>
<feature type="glycosylation site" description="N-linked (GlcNAc...) asparagine" evidence="3">
    <location>
        <position position="146"/>
    </location>
</feature>
<feature type="glycosylation site" description="N-linked (GlcNAc...) asparagine" evidence="3">
    <location>
        <position position="176"/>
    </location>
</feature>
<feature type="glycosylation site" description="N-linked (GlcNAc...) asparagine" evidence="3">
    <location>
        <position position="194"/>
    </location>
</feature>
<feature type="glycosylation site" description="N-linked (GlcNAc...) asparagine" evidence="3">
    <location>
        <position position="225"/>
    </location>
</feature>
<feature type="glycosylation site" description="N-linked (GlcNAc...) asparagine" evidence="3">
    <location>
        <position position="259"/>
    </location>
</feature>
<feature type="glycosylation site" description="N-linked (GlcNAc...) asparagine" evidence="3">
    <location>
        <position position="278"/>
    </location>
</feature>
<feature type="disulfide bond" evidence="4 12">
    <location>
        <begin position="42"/>
        <end position="93"/>
    </location>
</feature>
<feature type="disulfide bond" evidence="4 12">
    <location>
        <begin position="117"/>
        <end position="157"/>
    </location>
</feature>
<feature type="disulfide bond" evidence="4 12">
    <location>
        <begin position="139"/>
        <end position="187"/>
    </location>
</feature>
<feature type="disulfide bond" evidence="4 12">
    <location>
        <begin position="240"/>
        <end position="308"/>
    </location>
</feature>
<feature type="disulfide bond" evidence="4 12">
    <location>
        <begin position="243"/>
        <end position="287"/>
    </location>
</feature>
<feature type="cross-link" description="Glycyl lysine isopeptide (Lys-Gly) (interchain with G-Cter in ubiquitin)" evidence="11">
    <location>
        <position position="326"/>
    </location>
</feature>
<feature type="splice variant" id="VSP_002668" description="In isoform B." evidence="17 18">
    <original>IDHRSIYYI</original>
    <variation>SKECPSHIA</variation>
    <location>
        <begin position="329"/>
        <end position="337"/>
    </location>
</feature>
<feature type="splice variant" id="VSP_002669" description="In isoform B." evidence="17 18">
    <location>
        <begin position="338"/>
        <end position="567"/>
    </location>
</feature>
<feature type="sequence variant" description="In strain: C3H/He.">
    <original>A</original>
    <variation>V</variation>
    <location>
        <position position="192"/>
    </location>
</feature>
<feature type="mutagenesis site" description="Complete loss of FBXL19-mediated polyubiquitination." evidence="11">
    <original>K</original>
    <variation>R</variation>
    <location>
        <position position="326"/>
    </location>
</feature>
<feature type="mutagenesis site" description="Complete loss of phosphorylation by GSK3B." evidence="11">
    <original>S</original>
    <variation>A</variation>
    <location>
        <position position="442"/>
    </location>
</feature>
<feature type="strand" evidence="21">
    <location>
        <begin position="30"/>
        <end position="33"/>
    </location>
</feature>
<feature type="strand" evidence="21">
    <location>
        <begin position="36"/>
        <end position="41"/>
    </location>
</feature>
<feature type="strand" evidence="21">
    <location>
        <begin position="55"/>
        <end position="57"/>
    </location>
</feature>
<feature type="strand" evidence="21">
    <location>
        <begin position="72"/>
        <end position="74"/>
    </location>
</feature>
<feature type="strand" evidence="21">
    <location>
        <begin position="77"/>
        <end position="83"/>
    </location>
</feature>
<feature type="helix" evidence="21">
    <location>
        <begin position="85"/>
        <end position="87"/>
    </location>
</feature>
<feature type="strand" evidence="21">
    <location>
        <begin position="89"/>
        <end position="95"/>
    </location>
</feature>
<feature type="strand" evidence="21">
    <location>
        <begin position="103"/>
        <end position="111"/>
    </location>
</feature>
<feature type="strand" evidence="21">
    <location>
        <begin position="115"/>
        <end position="118"/>
    </location>
</feature>
<feature type="helix" evidence="21">
    <location>
        <begin position="121"/>
        <end position="123"/>
    </location>
</feature>
<feature type="strand" evidence="21">
    <location>
        <begin position="124"/>
        <end position="131"/>
    </location>
</feature>
<feature type="strand" evidence="21">
    <location>
        <begin position="136"/>
        <end position="138"/>
    </location>
</feature>
<feature type="helix" evidence="21">
    <location>
        <begin position="142"/>
        <end position="144"/>
    </location>
</feature>
<feature type="strand" evidence="21">
    <location>
        <begin position="152"/>
        <end position="155"/>
    </location>
</feature>
<feature type="strand" evidence="21">
    <location>
        <begin position="162"/>
        <end position="168"/>
    </location>
</feature>
<feature type="strand" evidence="21">
    <location>
        <begin position="171"/>
        <end position="174"/>
    </location>
</feature>
<feature type="helix" evidence="21">
    <location>
        <begin position="179"/>
        <end position="181"/>
    </location>
</feature>
<feature type="strand" evidence="21">
    <location>
        <begin position="183"/>
        <end position="193"/>
    </location>
</feature>
<feature type="strand" evidence="21">
    <location>
        <begin position="196"/>
        <end position="209"/>
    </location>
</feature>
<feature type="strand" evidence="21">
    <location>
        <begin position="218"/>
        <end position="222"/>
    </location>
</feature>
<feature type="strand" evidence="21">
    <location>
        <begin position="224"/>
        <end position="227"/>
    </location>
</feature>
<feature type="strand" evidence="21">
    <location>
        <begin position="237"/>
        <end position="243"/>
    </location>
</feature>
<feature type="strand" evidence="21">
    <location>
        <begin position="252"/>
        <end position="262"/>
    </location>
</feature>
<feature type="strand" evidence="21">
    <location>
        <begin position="271"/>
        <end position="274"/>
    </location>
</feature>
<feature type="strand" evidence="21">
    <location>
        <begin position="287"/>
        <end position="293"/>
    </location>
</feature>
<feature type="helix" evidence="21">
    <location>
        <begin position="301"/>
        <end position="303"/>
    </location>
</feature>
<feature type="strand" evidence="21">
    <location>
        <begin position="306"/>
        <end position="312"/>
    </location>
</feature>
<feature type="strand" evidence="21">
    <location>
        <begin position="315"/>
        <end position="322"/>
    </location>
</feature>
<dbReference type="EC" id="3.2.2.6" evidence="5"/>
<dbReference type="EMBL" id="Y07519">
    <property type="protein sequence ID" value="CAA68812.1"/>
    <property type="molecule type" value="mRNA"/>
</dbReference>
<dbReference type="EMBL" id="X60184">
    <property type="protein sequence ID" value="CAA42742.1"/>
    <property type="molecule type" value="Genomic_DNA"/>
</dbReference>
<dbReference type="EMBL" id="M24843">
    <property type="protein sequence ID" value="AAA40160.1"/>
    <property type="molecule type" value="mRNA"/>
</dbReference>
<dbReference type="EMBL" id="D13695">
    <property type="protein sequence ID" value="BAA02854.1"/>
    <property type="molecule type" value="mRNA"/>
</dbReference>
<dbReference type="CCDS" id="CCDS35548.1">
    <molecule id="P14719-1"/>
</dbReference>
<dbReference type="CCDS" id="CCDS56626.1">
    <molecule id="P14719-2"/>
</dbReference>
<dbReference type="PIR" id="S29498">
    <property type="entry name" value="S29498"/>
</dbReference>
<dbReference type="RefSeq" id="NP_001020773.1">
    <molecule id="P14719-1"/>
    <property type="nucleotide sequence ID" value="NM_001025602.4"/>
</dbReference>
<dbReference type="RefSeq" id="NP_001281100.1">
    <molecule id="P14719-2"/>
    <property type="nucleotide sequence ID" value="NM_001294171.2"/>
</dbReference>
<dbReference type="RefSeq" id="NP_001407277.1">
    <molecule id="P14719-1"/>
    <property type="nucleotide sequence ID" value="NM_001420348.1"/>
</dbReference>
<dbReference type="RefSeq" id="NP_001407278.1">
    <molecule id="P14719-1"/>
    <property type="nucleotide sequence ID" value="NM_001420349.1"/>
</dbReference>
<dbReference type="RefSeq" id="NP_001407279.1">
    <molecule id="P14719-1"/>
    <property type="nucleotide sequence ID" value="NM_001420350.1"/>
</dbReference>
<dbReference type="RefSeq" id="NP_034873.2">
    <molecule id="P14719-2"/>
    <property type="nucleotide sequence ID" value="NM_010743.4"/>
</dbReference>
<dbReference type="RefSeq" id="XP_006495804.1">
    <property type="nucleotide sequence ID" value="XM_006495741.1"/>
</dbReference>
<dbReference type="RefSeq" id="XP_006495807.1">
    <property type="nucleotide sequence ID" value="XM_006495744.2"/>
</dbReference>
<dbReference type="RefSeq" id="XP_017174571.1">
    <property type="nucleotide sequence ID" value="XM_017319082.1"/>
</dbReference>
<dbReference type="PDB" id="5VI4">
    <property type="method" value="X-ray"/>
    <property type="resolution" value="2.79 A"/>
    <property type="chains" value="B/E=26-326"/>
</dbReference>
<dbReference type="PDBsum" id="5VI4"/>
<dbReference type="SMR" id="P14719"/>
<dbReference type="BioGRID" id="201248">
    <property type="interactions" value="3"/>
</dbReference>
<dbReference type="CORUM" id="P14719"/>
<dbReference type="DIP" id="DIP-34958N"/>
<dbReference type="FunCoup" id="P14719">
    <property type="interactions" value="350"/>
</dbReference>
<dbReference type="IntAct" id="P14719">
    <property type="interactions" value="4"/>
</dbReference>
<dbReference type="STRING" id="10090.ENSMUSP00000095379"/>
<dbReference type="GlyCosmos" id="P14719">
    <property type="glycosylation" value="9 sites, No reported glycans"/>
</dbReference>
<dbReference type="GlyGen" id="P14719">
    <property type="glycosylation" value="9 sites"/>
</dbReference>
<dbReference type="iPTMnet" id="P14719"/>
<dbReference type="PhosphoSitePlus" id="P14719"/>
<dbReference type="PaxDb" id="10090-ENSMUSP00000095379"/>
<dbReference type="ProteomicsDB" id="269402">
    <molecule id="P14719-1"/>
</dbReference>
<dbReference type="ProteomicsDB" id="269403">
    <molecule id="P14719-2"/>
</dbReference>
<dbReference type="Pumba" id="P14719"/>
<dbReference type="ABCD" id="P14719">
    <property type="antibodies" value="2 sequenced antibodies"/>
</dbReference>
<dbReference type="Antibodypedia" id="2362">
    <property type="antibodies" value="714 antibodies from 41 providers"/>
</dbReference>
<dbReference type="DNASU" id="17082"/>
<dbReference type="Ensembl" id="ENSMUST00000053043.8">
    <molecule id="P14719-1"/>
    <property type="protein sequence ID" value="ENSMUSP00000054914.8"/>
    <property type="gene ID" value="ENSMUSG00000026069.16"/>
</dbReference>
<dbReference type="Ensembl" id="ENSMUST00000097772.10">
    <molecule id="P14719-1"/>
    <property type="protein sequence ID" value="ENSMUSP00000095379.4"/>
    <property type="gene ID" value="ENSMUSG00000026069.16"/>
</dbReference>
<dbReference type="Ensembl" id="ENSMUST00000173514.8">
    <molecule id="P14719-2"/>
    <property type="protein sequence ID" value="ENSMUSP00000133784.2"/>
    <property type="gene ID" value="ENSMUSG00000026069.16"/>
</dbReference>
<dbReference type="Ensembl" id="ENSMUST00000174335.8">
    <molecule id="P14719-2"/>
    <property type="protein sequence ID" value="ENSMUSP00000134351.2"/>
    <property type="gene ID" value="ENSMUSG00000026069.16"/>
</dbReference>
<dbReference type="GeneID" id="17082"/>
<dbReference type="KEGG" id="mmu:17082"/>
<dbReference type="UCSC" id="uc007aub.3">
    <molecule id="P14719-1"/>
    <property type="organism name" value="mouse"/>
</dbReference>
<dbReference type="AGR" id="MGI:98427"/>
<dbReference type="CTD" id="9173"/>
<dbReference type="MGI" id="MGI:98427">
    <property type="gene designation" value="Il1rl1"/>
</dbReference>
<dbReference type="VEuPathDB" id="HostDB:ENSMUSG00000026069"/>
<dbReference type="eggNOG" id="ENOG502RU6H">
    <property type="taxonomic scope" value="Eukaryota"/>
</dbReference>
<dbReference type="GeneTree" id="ENSGT01090000259985"/>
<dbReference type="HOGENOM" id="CLU_025552_3_2_1"/>
<dbReference type="InParanoid" id="P14719"/>
<dbReference type="OMA" id="HQSTYYI"/>
<dbReference type="OrthoDB" id="6132459at2759"/>
<dbReference type="PhylomeDB" id="P14719"/>
<dbReference type="TreeFam" id="TF325519"/>
<dbReference type="Reactome" id="R-MMU-1257604">
    <property type="pathway name" value="PIP3 activates AKT signaling"/>
</dbReference>
<dbReference type="Reactome" id="R-MMU-6811558">
    <property type="pathway name" value="PI5P, PP2A and IER3 Regulate PI3K/AKT Signaling"/>
</dbReference>
<dbReference type="Reactome" id="R-MMU-9014843">
    <property type="pathway name" value="Interleukin-33 signaling"/>
</dbReference>
<dbReference type="BioGRID-ORCS" id="17082">
    <property type="hits" value="1 hit in 77 CRISPR screens"/>
</dbReference>
<dbReference type="ChiTaRS" id="Il1rl1">
    <property type="organism name" value="mouse"/>
</dbReference>
<dbReference type="PRO" id="PR:P14719"/>
<dbReference type="Proteomes" id="UP000000589">
    <property type="component" value="Chromosome 1"/>
</dbReference>
<dbReference type="RNAct" id="P14719">
    <property type="molecule type" value="protein"/>
</dbReference>
<dbReference type="Bgee" id="ENSMUSG00000026069">
    <property type="expression patterns" value="Expressed in endothelial cell of lymphatic vessel and 51 other cell types or tissues"/>
</dbReference>
<dbReference type="ExpressionAtlas" id="P14719">
    <property type="expression patterns" value="baseline and differential"/>
</dbReference>
<dbReference type="GO" id="GO:0005829">
    <property type="term" value="C:cytosol"/>
    <property type="evidence" value="ECO:0007669"/>
    <property type="project" value="Ensembl"/>
</dbReference>
<dbReference type="GO" id="GO:0009897">
    <property type="term" value="C:external side of plasma membrane"/>
    <property type="evidence" value="ECO:0000314"/>
    <property type="project" value="MGI"/>
</dbReference>
<dbReference type="GO" id="GO:0031012">
    <property type="term" value="C:extracellular matrix"/>
    <property type="evidence" value="ECO:0000314"/>
    <property type="project" value="MGI"/>
</dbReference>
<dbReference type="GO" id="GO:0005576">
    <property type="term" value="C:extracellular region"/>
    <property type="evidence" value="ECO:0007669"/>
    <property type="project" value="UniProtKB-SubCell"/>
</dbReference>
<dbReference type="GO" id="GO:0005925">
    <property type="term" value="C:focal adhesion"/>
    <property type="evidence" value="ECO:0007669"/>
    <property type="project" value="Ensembl"/>
</dbReference>
<dbReference type="GO" id="GO:0016020">
    <property type="term" value="C:membrane"/>
    <property type="evidence" value="ECO:0000314"/>
    <property type="project" value="MGI"/>
</dbReference>
<dbReference type="GO" id="GO:0004908">
    <property type="term" value="F:interleukin-1 receptor activity"/>
    <property type="evidence" value="ECO:0007669"/>
    <property type="project" value="InterPro"/>
</dbReference>
<dbReference type="GO" id="GO:0002113">
    <property type="term" value="F:interleukin-33 binding"/>
    <property type="evidence" value="ECO:0000353"/>
    <property type="project" value="MGI"/>
</dbReference>
<dbReference type="GO" id="GO:0002114">
    <property type="term" value="F:interleukin-33 receptor activity"/>
    <property type="evidence" value="ECO:0000353"/>
    <property type="project" value="MGI"/>
</dbReference>
<dbReference type="GO" id="GO:0061809">
    <property type="term" value="F:NAD+ nucleosidase activity, cyclic ADP-ribose generating"/>
    <property type="evidence" value="ECO:0007669"/>
    <property type="project" value="UniProtKB-EC"/>
</dbReference>
<dbReference type="GO" id="GO:0006954">
    <property type="term" value="P:inflammatory response"/>
    <property type="evidence" value="ECO:0000315"/>
    <property type="project" value="UniProtKB"/>
</dbReference>
<dbReference type="GO" id="GO:0030225">
    <property type="term" value="P:macrophage differentiation"/>
    <property type="evidence" value="ECO:0000315"/>
    <property type="project" value="UniProtKB"/>
</dbReference>
<dbReference type="GO" id="GO:0043124">
    <property type="term" value="P:negative regulation of canonical NF-kappaB signal transduction"/>
    <property type="evidence" value="ECO:0000314"/>
    <property type="project" value="MGI"/>
</dbReference>
<dbReference type="GO" id="GO:0002826">
    <property type="term" value="P:negative regulation of T-helper 1 type immune response"/>
    <property type="evidence" value="ECO:0000316"/>
    <property type="project" value="BHF-UCL"/>
</dbReference>
<dbReference type="GO" id="GO:0032689">
    <property type="term" value="P:negative regulation of type II interferon production"/>
    <property type="evidence" value="ECO:0000316"/>
    <property type="project" value="BHF-UCL"/>
</dbReference>
<dbReference type="GO" id="GO:0032722">
    <property type="term" value="P:positive regulation of chemokine production"/>
    <property type="evidence" value="ECO:0000315"/>
    <property type="project" value="BHF-UCL"/>
</dbReference>
<dbReference type="GO" id="GO:0050729">
    <property type="term" value="P:positive regulation of inflammatory response"/>
    <property type="evidence" value="ECO:0000315"/>
    <property type="project" value="BHF-UCL"/>
</dbReference>
<dbReference type="GO" id="GO:0032754">
    <property type="term" value="P:positive regulation of interleukin-5 production"/>
    <property type="evidence" value="ECO:0000316"/>
    <property type="project" value="BHF-UCL"/>
</dbReference>
<dbReference type="GO" id="GO:0043032">
    <property type="term" value="P:positive regulation of macrophage activation"/>
    <property type="evidence" value="ECO:0000315"/>
    <property type="project" value="BHF-UCL"/>
</dbReference>
<dbReference type="GO" id="GO:0009611">
    <property type="term" value="P:response to wounding"/>
    <property type="evidence" value="ECO:0000314"/>
    <property type="project" value="MGI"/>
</dbReference>
<dbReference type="CDD" id="cd05757">
    <property type="entry name" value="Ig2_IL1R-like"/>
    <property type="match status" value="1"/>
</dbReference>
<dbReference type="FunFam" id="3.40.50.10140:FF:000002">
    <property type="entry name" value="Interleukin 1 receptor accessory protein"/>
    <property type="match status" value="1"/>
</dbReference>
<dbReference type="FunFam" id="2.60.40.10:FF:000188">
    <property type="entry name" value="Interleukin-1 receptor accessory protein-like 1"/>
    <property type="match status" value="1"/>
</dbReference>
<dbReference type="FunFam" id="2.60.40.10:FF:000284">
    <property type="entry name" value="interleukin-1 receptor accessory protein-like 1"/>
    <property type="match status" value="1"/>
</dbReference>
<dbReference type="FunFam" id="2.60.40.10:FF:001471">
    <property type="entry name" value="interleukin-1 receptor-like 1 isoform X3"/>
    <property type="match status" value="1"/>
</dbReference>
<dbReference type="Gene3D" id="2.60.40.10">
    <property type="entry name" value="Immunoglobulins"/>
    <property type="match status" value="3"/>
</dbReference>
<dbReference type="Gene3D" id="3.40.50.10140">
    <property type="entry name" value="Toll/interleukin-1 receptor homology (TIR) domain"/>
    <property type="match status" value="1"/>
</dbReference>
<dbReference type="InterPro" id="IPR007110">
    <property type="entry name" value="Ig-like_dom"/>
</dbReference>
<dbReference type="InterPro" id="IPR036179">
    <property type="entry name" value="Ig-like_dom_sf"/>
</dbReference>
<dbReference type="InterPro" id="IPR013783">
    <property type="entry name" value="Ig-like_fold"/>
</dbReference>
<dbReference type="InterPro" id="IPR003599">
    <property type="entry name" value="Ig_sub"/>
</dbReference>
<dbReference type="InterPro" id="IPR003598">
    <property type="entry name" value="Ig_sub2"/>
</dbReference>
<dbReference type="InterPro" id="IPR015621">
    <property type="entry name" value="IL-1_rcpt_fam"/>
</dbReference>
<dbReference type="InterPro" id="IPR004074">
    <property type="entry name" value="IL-1_rcpt_I/II-typ"/>
</dbReference>
<dbReference type="InterPro" id="IPR013151">
    <property type="entry name" value="Immunoglobulin_dom"/>
</dbReference>
<dbReference type="InterPro" id="IPR000157">
    <property type="entry name" value="TIR_dom"/>
</dbReference>
<dbReference type="InterPro" id="IPR035897">
    <property type="entry name" value="Toll_tir_struct_dom_sf"/>
</dbReference>
<dbReference type="PANTHER" id="PTHR11890">
    <property type="entry name" value="INTERLEUKIN-1 RECEPTOR FAMILY MEMBER"/>
    <property type="match status" value="1"/>
</dbReference>
<dbReference type="PANTHER" id="PTHR11890:SF7">
    <property type="entry name" value="INTERLEUKIN-1 RECEPTOR-LIKE 1"/>
    <property type="match status" value="1"/>
</dbReference>
<dbReference type="Pfam" id="PF00047">
    <property type="entry name" value="ig"/>
    <property type="match status" value="1"/>
</dbReference>
<dbReference type="Pfam" id="PF01582">
    <property type="entry name" value="TIR"/>
    <property type="match status" value="1"/>
</dbReference>
<dbReference type="PRINTS" id="PR01536">
    <property type="entry name" value="INTRLKN1R12F"/>
</dbReference>
<dbReference type="PRINTS" id="PR01537">
    <property type="entry name" value="INTRLKN1R1F"/>
</dbReference>
<dbReference type="SMART" id="SM00409">
    <property type="entry name" value="IG"/>
    <property type="match status" value="3"/>
</dbReference>
<dbReference type="SMART" id="SM00408">
    <property type="entry name" value="IGc2"/>
    <property type="match status" value="2"/>
</dbReference>
<dbReference type="SMART" id="SM00255">
    <property type="entry name" value="TIR"/>
    <property type="match status" value="1"/>
</dbReference>
<dbReference type="SUPFAM" id="SSF48726">
    <property type="entry name" value="Immunoglobulin"/>
    <property type="match status" value="3"/>
</dbReference>
<dbReference type="SUPFAM" id="SSF52200">
    <property type="entry name" value="Toll/Interleukin receptor TIR domain"/>
    <property type="match status" value="1"/>
</dbReference>
<dbReference type="PROSITE" id="PS50835">
    <property type="entry name" value="IG_LIKE"/>
    <property type="match status" value="3"/>
</dbReference>
<dbReference type="PROSITE" id="PS50104">
    <property type="entry name" value="TIR"/>
    <property type="match status" value="1"/>
</dbReference>
<proteinExistence type="evidence at protein level"/>
<keyword id="KW-0002">3D-structure</keyword>
<keyword id="KW-0025">Alternative splicing</keyword>
<keyword id="KW-1003">Cell membrane</keyword>
<keyword id="KW-1015">Disulfide bond</keyword>
<keyword id="KW-0325">Glycoprotein</keyword>
<keyword id="KW-0378">Hydrolase</keyword>
<keyword id="KW-0393">Immunoglobulin domain</keyword>
<keyword id="KW-1017">Isopeptide bond</keyword>
<keyword id="KW-0472">Membrane</keyword>
<keyword id="KW-0520">NAD</keyword>
<keyword id="KW-0597">Phosphoprotein</keyword>
<keyword id="KW-0675">Receptor</keyword>
<keyword id="KW-1185">Reference proteome</keyword>
<keyword id="KW-0677">Repeat</keyword>
<keyword id="KW-0964">Secreted</keyword>
<keyword id="KW-0732">Signal</keyword>
<keyword id="KW-0812">Transmembrane</keyword>
<keyword id="KW-1133">Transmembrane helix</keyword>
<keyword id="KW-0832">Ubl conjugation</keyword>
<protein>
    <recommendedName>
        <fullName>Interleukin-1 receptor-like 1</fullName>
        <ecNumber evidence="5">3.2.2.6</ecNumber>
    </recommendedName>
    <alternativeName>
        <fullName evidence="16">Interleukin-33 receptor alpha chain</fullName>
    </alternativeName>
    <alternativeName>
        <fullName>Lymphocyte antigen 84</fullName>
    </alternativeName>
    <alternativeName>
        <fullName>Protein ST2</fullName>
    </alternativeName>
    <alternativeName>
        <fullName>Protein T1</fullName>
    </alternativeName>
</protein>
<name>ILRL1_MOUSE</name>
<gene>
    <name type="primary">Il1rl1</name>
    <name type="synonym">Ly84</name>
    <name type="synonym">St2</name>
    <name type="synonym">Ste2</name>
</gene>
<reference key="1">
    <citation type="journal article" date="1989" name="FEBS Lett.">
        <title>A putative protein of a growth specific cDNA from BALB/c-3T3 cells is highly similar to the extracellular portion of mouse interleukin 1 receptor.</title>
        <authorList>
            <person name="Tominaga S."/>
        </authorList>
    </citation>
    <scope>NUCLEOTIDE SEQUENCE [MRNA] (ISOFORM B)</scope>
    <source>
        <strain>BALB/cJ</strain>
    </source>
</reference>
<reference key="2">
    <citation type="journal article" date="1991" name="Biochim. Biophys. Acta">
        <title>Molecular cloning of the murine ST2 gene. Characterization and chromosomal mapping.</title>
        <authorList>
            <person name="Tominaga S."/>
            <person name="Jenkins N.A."/>
            <person name="Gilbert D.J."/>
            <person name="Copeland N.G."/>
            <person name="Tetsuka T."/>
        </authorList>
    </citation>
    <scope>NUCLEOTIDE SEQUENCE [GENOMIC DNA] (ISOFORM B)</scope>
    <source>
        <strain>C3H/He</strain>
        <tissue>Spleen</tissue>
    </source>
</reference>
<reference key="3">
    <citation type="journal article" date="1989" name="Proc. Natl. Acad. Sci. U.S.A.">
        <title>Serum- and oncoprotein-mediated induction of a gene with sequence similarity to the gene encoding carcinoembryonic antigen.</title>
        <authorList>
            <person name="Klemenz R."/>
            <person name="Hoffmann S."/>
            <person name="Werenskiold A.K."/>
        </authorList>
    </citation>
    <scope>NUCLEOTIDE SEQUENCE [MRNA] (ISOFORM B)</scope>
</reference>
<reference key="4">
    <citation type="journal article" date="1993" name="FEBS Lett.">
        <title>Presence of a novel primary response gene ST2L, encoding a product highly similar to the interleukin 1 receptor type 1.</title>
        <authorList>
            <person name="Yanagisawa K."/>
            <person name="Takagi T."/>
            <person name="Tsukamoto T."/>
            <person name="Tetsuka T."/>
            <person name="Tominaga S."/>
        </authorList>
    </citation>
    <scope>NUCLEOTIDE SEQUENCE [MRNA] (ISOFORM A)</scope>
</reference>
<reference key="5">
    <citation type="journal article" date="1994" name="EMBO J.">
        <title>Alternative promoter usage of the Fos-responsive gene Fit-1 generates mRNA isoforms coding for either secreted or membrane-bound proteins related to the IL-1 receptor.</title>
        <authorList>
            <person name="Bergers G."/>
            <person name="Reikersdorfer A."/>
            <person name="Braselmann S."/>
            <person name="Graninger P."/>
            <person name="Busslinger M."/>
        </authorList>
    </citation>
    <scope>TISSUE SPECIFICITY</scope>
</reference>
<reference key="6">
    <citation type="journal article" date="2007" name="J. Immunol.">
        <title>IL-1 receptor accessory protein and ST2 comprise the IL-33 receptor complex.</title>
        <authorList>
            <person name="Chackerian A.A."/>
            <person name="Oldham E.R."/>
            <person name="Murphy E.E."/>
            <person name="Schmitz J."/>
            <person name="Pflanz S."/>
            <person name="Kastelein R.A."/>
        </authorList>
    </citation>
    <scope>FUNCTION</scope>
    <scope>SUBUNIT</scope>
</reference>
<reference key="7">
    <citation type="journal article" date="2007" name="Proc. Natl. Acad. Sci. U.S.A.">
        <title>IL-1 receptor accessory protein is essential for IL-33-induced activation of T lymphocytes and mast cells.</title>
        <authorList>
            <person name="Ali S."/>
            <person name="Huber M."/>
            <person name="Kollewe C."/>
            <person name="Bischoff S.C."/>
            <person name="Falk W."/>
            <person name="Martin M.U."/>
        </authorList>
    </citation>
    <scope>INTERACTION WITH IL1RAP</scope>
</reference>
<reference key="8">
    <citation type="journal article" date="2008" name="Cytokine">
        <title>The IL-1 receptor accessory protein (AcP) is required for IL-33 signaling and soluble AcP enhances the ability of soluble ST2 to inhibit IL-33.</title>
        <authorList>
            <person name="Palmer G."/>
            <person name="Lipsky B.P."/>
            <person name="Smithgall M.D."/>
            <person name="Meininger D."/>
            <person name="Siu S."/>
            <person name="Talabot-Ayer D."/>
            <person name="Gabay C."/>
            <person name="Smith D.E."/>
        </authorList>
    </citation>
    <scope>FUNCTION (ISOFORM B)</scope>
    <scope>INTERACTION WITH IL1RAP</scope>
</reference>
<reference key="9">
    <citation type="journal article" date="2010" name="Blood">
        <title>The receptor tyrosine kinase c-Kit controls IL-33 receptor signaling in mast cells.</title>
        <authorList>
            <person name="Drube S."/>
            <person name="Heink S."/>
            <person name="Walter S."/>
            <person name="Loehn T."/>
            <person name="Grusser M."/>
            <person name="Gerbaulet A."/>
            <person name="Berod L."/>
            <person name="Schons J."/>
            <person name="Dudeck A."/>
            <person name="Freitag J."/>
            <person name="Grotha S."/>
            <person name="Reich D."/>
            <person name="Rudeschko O."/>
            <person name="Norgauer J."/>
            <person name="Hartmann K."/>
            <person name="Roers A."/>
            <person name="Kamradt T."/>
        </authorList>
    </citation>
    <scope>INTERACTION WITH KIT</scope>
    <scope>SUBUNIT</scope>
</reference>
<reference key="10">
    <citation type="journal article" date="2011" name="Brain Res.">
        <title>Production and functions of IL-33 in the central nervous system.</title>
        <authorList>
            <person name="Yasuoka S."/>
            <person name="Kawanokuchi J."/>
            <person name="Parajuli B."/>
            <person name="Jin S."/>
            <person name="Doi Y."/>
            <person name="Noda M."/>
            <person name="Sonobe Y."/>
            <person name="Takeuchi H."/>
            <person name="Mizuno T."/>
            <person name="Suzumura A."/>
        </authorList>
    </citation>
    <scope>TISSUE SPECIFICITY</scope>
</reference>
<reference key="11">
    <citation type="journal article" date="2012" name="Nat. Immunol.">
        <title>F-box protein FBXL19-mediated ubiquitination and degradation of the receptor for IL-33 limits pulmonary inflammation.</title>
        <authorList>
            <person name="Zhao J."/>
            <person name="Wei J."/>
            <person name="Mialki R.K."/>
            <person name="Mallampalli D.F."/>
            <person name="Chen B.B."/>
            <person name="Coon T."/>
            <person name="Zou C."/>
            <person name="Mallampalli R.K."/>
            <person name="Zhao Y."/>
        </authorList>
    </citation>
    <scope>FUNCTION</scope>
    <scope>UBIQUITINATION AT LYS-326</scope>
    <scope>PHOSPHORYLATION AT SER-442</scope>
    <scope>MUTAGENESIS OF LYS-326 AND SER-442</scope>
</reference>
<reference key="12">
    <citation type="journal article" date="2017" name="Immunity">
        <title>HpARI Protein Secreted by a Helminth Parasite Suppresses Interleukin-33.</title>
        <authorList>
            <person name="Osbourn M."/>
            <person name="Soares D.C."/>
            <person name="Vacca F."/>
            <person name="Cohen E.S."/>
            <person name="Scott I.C."/>
            <person name="Gregory W.F."/>
            <person name="Smyth D.J."/>
            <person name="Toivakka M."/>
            <person name="Kemter A.M."/>
            <person name="le Bihan T."/>
            <person name="Wear M."/>
            <person name="Hoving D."/>
            <person name="Filbey K.J."/>
            <person name="Hewitson J.P."/>
            <person name="Henderson H."/>
            <person name="Gonzalez-Ciscar A."/>
            <person name="Errington C."/>
            <person name="Vermeren S."/>
            <person name="Astier A.L."/>
            <person name="Wallace W.A."/>
            <person name="Schwarze J."/>
            <person name="Ivens A.C."/>
            <person name="Maizels R.M."/>
            <person name="McSorley H.J."/>
        </authorList>
    </citation>
    <scope>FUNCTION</scope>
</reference>
<reference key="13">
    <citation type="journal article" date="2021" name="Immunity">
        <title>IL-33-induced metabolic reprogramming controls the differentiation of alternatively activated macrophages and the resolution of inflammation.</title>
        <authorList>
            <person name="Faas M."/>
            <person name="Ipseiz N."/>
            <person name="Ackermann J."/>
            <person name="Culemann S."/>
            <person name="Grueneboom A."/>
            <person name="Schroeder F."/>
            <person name="Rothe T."/>
            <person name="Scholtysek C."/>
            <person name="Eberhardt M."/>
            <person name="Boettcher M."/>
            <person name="Kirchner P."/>
            <person name="Stoll C."/>
            <person name="Ekici A."/>
            <person name="Fuchs M."/>
            <person name="Kunz M."/>
            <person name="Weigmann B."/>
            <person name="Wirtz S."/>
            <person name="Lang R."/>
            <person name="Hofmann J."/>
            <person name="Vera J."/>
            <person name="Voehringer D."/>
            <person name="Michelucci A."/>
            <person name="Mougiakakos D."/>
            <person name="Uderhardt S."/>
            <person name="Schett G."/>
            <person name="Kroenke G."/>
        </authorList>
    </citation>
    <scope>FUNCTION</scope>
    <scope>DISRUPTION PHENOTYPE</scope>
</reference>
<reference evidence="20" key="14">
    <citation type="journal article" date="2017" name="Immunity">
        <title>IL-1 Family Cytokines Use Distinct Molecular Mechanisms to Signal through Their Shared Co-receptor.</title>
        <authorList>
            <person name="Gunther S."/>
            <person name="Deredge D."/>
            <person name="Bowers A.L."/>
            <person name="Luchini A."/>
            <person name="Bonsor D.A."/>
            <person name="Beadenkopf R."/>
            <person name="Liotta L."/>
            <person name="Wintrode P.L."/>
            <person name="Sundberg E.J."/>
        </authorList>
    </citation>
    <scope>X-RAY CRYSTALLOGRAPHY (2.79 ANGSTROMS) OF 26-326</scope>
    <scope>DISULFIDE BOND</scope>
    <scope>INTERACTION WITH IL1RAP</scope>
</reference>
<comment type="function">
    <text evidence="2 6 8 13 14">Receptor for interleukin-33 (IL-33) which plays crucial roles in innate and adaptive immunity, contributing to tissue homeostasis and responses to environmental stresses together with coreceptor IL1RAP (PubMed:17675517, PubMed:18450470, PubMed:22660580, PubMed:29045903). Its stimulation recruits MYD88, IRAK1, IRAK4, and TRAF6, followed by phosphorylation of MAPK3/ERK1 and/or MAPK1/ERK2, MAPK14, and MAPK8 (By similarity). Possibly involved in helper T-cell function (By similarity). Upon tissue injury, induces UCP2-dependent mitochondrial rewiring that attenuates the generation of reactive oxygen species and preserves the integrity of Krebs cycle required for persistent production of itaconate and subsequent GATA3-dependent differentiation of inflammation-resolving alternatively activated macrophages (PubMed:34644537).</text>
</comment>
<comment type="function">
    <molecule>Isoform B</molecule>
    <text evidence="8">Inhibits IL-33 signaling.</text>
</comment>
<comment type="catalytic activity">
    <reaction evidence="5">
        <text>NAD(+) + H2O = ADP-D-ribose + nicotinamide + H(+)</text>
        <dbReference type="Rhea" id="RHEA:16301"/>
        <dbReference type="ChEBI" id="CHEBI:15377"/>
        <dbReference type="ChEBI" id="CHEBI:15378"/>
        <dbReference type="ChEBI" id="CHEBI:17154"/>
        <dbReference type="ChEBI" id="CHEBI:57540"/>
        <dbReference type="ChEBI" id="CHEBI:57967"/>
        <dbReference type="EC" id="3.2.2.6"/>
    </reaction>
    <physiologicalReaction direction="left-to-right" evidence="5">
        <dbReference type="Rhea" id="RHEA:16302"/>
    </physiologicalReaction>
</comment>
<comment type="subunit">
    <text evidence="2 6 7 8 9 12">Interacts with MYD88, IRAK1, IRAK4, and TRAF6 (By similarity). Bound to its ligand IL33, interacts with IL1RAP to form the minimal interleukin-33 signaling complex with a 1:1:1 stoichiometry. Interacts with KIT (bound to KITLG/SCF). A mast cell-specific KITLG/SCF-induced interleukin-33 signaling complex contains IL1RL1, IL1RAP, KIT and MYD88. Interacts with TMED1.</text>
</comment>
<comment type="interaction">
    <interactant intactId="EBI-525078">
        <id>P14719</id>
    </interactant>
    <interactant intactId="EBI-525035">
        <id>Q61730</id>
        <label>Il1rap</label>
    </interactant>
    <organismsDiffer>false</organismsDiffer>
    <experiments>3</experiments>
</comment>
<comment type="interaction">
    <interactant intactId="EBI-525078">
        <id>P14719</id>
    </interactant>
    <interactant intactId="EBI-6664563">
        <id>Q6PCT2</id>
        <label>FBXL19</label>
    </interactant>
    <organismsDiffer>true</organismsDiffer>
    <experiments>3</experiments>
</comment>
<comment type="subcellular location">
    <subcellularLocation>
        <location>Cell membrane</location>
        <topology>Single-pass type I membrane protein</topology>
    </subcellularLocation>
</comment>
<comment type="subcellular location">
    <molecule>Isoform B</molecule>
    <subcellularLocation>
        <location>Secreted</location>
    </subcellularLocation>
</comment>
<comment type="alternative products">
    <event type="alternative splicing"/>
    <isoform>
        <id>P14719-1</id>
        <name>A</name>
        <name>Membrane-bound</name>
        <name>ST2L</name>
        <sequence type="displayed"/>
    </isoform>
    <isoform>
        <id>P14719-2</id>
        <name>B</name>
        <name>Soluble</name>
        <name>ST2</name>
        <sequence type="described" ref="VSP_002668 VSP_002669"/>
    </isoform>
</comment>
<comment type="tissue specificity">
    <text evidence="10 15">Predominantly expressed in hematopoietic tissues, and in macrophage, erythroid, epithelial and fibroblast cell lines. Isoform A is expressed in brain astrocytes and microglia. Isoform B is expressed in brain endothelial cells.</text>
</comment>
<comment type="developmental stage">
    <text>Expressed first in the fetal liver and then in lung and hematopoietic tissues.</text>
</comment>
<comment type="domain">
    <text evidence="5">The TIR domain mediates NAD(+) hydrolase (NADase) activity. Self-association of TIR domains is required for NADase activity.</text>
</comment>
<comment type="PTM">
    <text evidence="11">Phosphorylated by GSK3B at Ser-442; leading to proteasomal degradation.</text>
</comment>
<comment type="PTM">
    <text evidence="2 11">Ubiquitinated at Lys-326 in a FBXL19-mediated manner; leading to proteasomal degradation (PubMed:22660580). Ubiquitination by TRAF6 via 'Lys-27'-linked polyubiquitination and deubiquitination by USP38 serves as a critical regulatory mechanism for fine-tuning IL1RL1-mediated inflammatory response (By similarity).</text>
</comment>
<comment type="disruption phenotype">
    <text evidence="14">In response to cardiotoxin-induced muscle injury, mutant mice show impaired inflammation resolution characterized by deficient muscle fiber regeneration and impaired clearance of necrotic cells.</text>
</comment>
<comment type="similarity">
    <text evidence="19">Belongs to the interleukin-1 receptor family.</text>
</comment>
<accession>P14719</accession>
<accession>Q05208</accession>